<accession>Q13371</accession>
<accession>Q4VXB6</accession>
<accession>Q96AF1</accession>
<accession>Q9UEW7</accession>
<accession>Q9UFL0</accession>
<accession>Q9UNX1</accession>
<accession>Q9UNX2</accession>
<organism>
    <name type="scientific">Homo sapiens</name>
    <name type="common">Human</name>
    <dbReference type="NCBI Taxonomy" id="9606"/>
    <lineage>
        <taxon>Eukaryota</taxon>
        <taxon>Metazoa</taxon>
        <taxon>Chordata</taxon>
        <taxon>Craniata</taxon>
        <taxon>Vertebrata</taxon>
        <taxon>Euteleostomi</taxon>
        <taxon>Mammalia</taxon>
        <taxon>Eutheria</taxon>
        <taxon>Euarchontoglires</taxon>
        <taxon>Primates</taxon>
        <taxon>Haplorrhini</taxon>
        <taxon>Catarrhini</taxon>
        <taxon>Hominidae</taxon>
        <taxon>Homo</taxon>
    </lineage>
</organism>
<reference key="1">
    <citation type="submission" date="1997-10" db="EMBL/GenBank/DDBJ databases">
        <title>Molecular cloning and functional analysis of human phosducin-like protein.</title>
        <authorList>
            <person name="Lazarov M.E."/>
            <person name="Martin M.M."/>
            <person name="Savage J.R."/>
            <person name="Willardson B.M."/>
            <person name="Elton T.S."/>
        </authorList>
    </citation>
    <scope>NUCLEOTIDE SEQUENCE [MRNA] (ISOFORM 1)</scope>
</reference>
<reference key="2">
    <citation type="journal article" date="2001" name="Genome Res.">
        <title>Towards a catalog of human genes and proteins: sequencing and analysis of 500 novel complete protein coding human cDNAs.</title>
        <authorList>
            <person name="Wiemann S."/>
            <person name="Weil B."/>
            <person name="Wellenreuther R."/>
            <person name="Gassenhuber J."/>
            <person name="Glassl S."/>
            <person name="Ansorge W."/>
            <person name="Boecher M."/>
            <person name="Bloecker H."/>
            <person name="Bauersachs S."/>
            <person name="Blum H."/>
            <person name="Lauber J."/>
            <person name="Duesterhoeft A."/>
            <person name="Beyer A."/>
            <person name="Koehrer K."/>
            <person name="Strack N."/>
            <person name="Mewes H.-W."/>
            <person name="Ottenwaelder B."/>
            <person name="Obermaier B."/>
            <person name="Tampe J."/>
            <person name="Heubner D."/>
            <person name="Wambutt R."/>
            <person name="Korn B."/>
            <person name="Klein M."/>
            <person name="Poustka A."/>
        </authorList>
    </citation>
    <scope>NUCLEOTIDE SEQUENCE [LARGE SCALE MRNA] (ISOFORM 1)</scope>
    <source>
        <tissue>Brain</tissue>
    </source>
</reference>
<reference key="3">
    <citation type="journal article" date="2004" name="Nat. Genet.">
        <title>Complete sequencing and characterization of 21,243 full-length human cDNAs.</title>
        <authorList>
            <person name="Ota T."/>
            <person name="Suzuki Y."/>
            <person name="Nishikawa T."/>
            <person name="Otsuki T."/>
            <person name="Sugiyama T."/>
            <person name="Irie R."/>
            <person name="Wakamatsu A."/>
            <person name="Hayashi K."/>
            <person name="Sato H."/>
            <person name="Nagai K."/>
            <person name="Kimura K."/>
            <person name="Makita H."/>
            <person name="Sekine M."/>
            <person name="Obayashi M."/>
            <person name="Nishi T."/>
            <person name="Shibahara T."/>
            <person name="Tanaka T."/>
            <person name="Ishii S."/>
            <person name="Yamamoto J."/>
            <person name="Saito K."/>
            <person name="Kawai Y."/>
            <person name="Isono Y."/>
            <person name="Nakamura Y."/>
            <person name="Nagahari K."/>
            <person name="Murakami K."/>
            <person name="Yasuda T."/>
            <person name="Iwayanagi T."/>
            <person name="Wagatsuma M."/>
            <person name="Shiratori A."/>
            <person name="Sudo H."/>
            <person name="Hosoiri T."/>
            <person name="Kaku Y."/>
            <person name="Kodaira H."/>
            <person name="Kondo H."/>
            <person name="Sugawara M."/>
            <person name="Takahashi M."/>
            <person name="Kanda K."/>
            <person name="Yokoi T."/>
            <person name="Furuya T."/>
            <person name="Kikkawa E."/>
            <person name="Omura Y."/>
            <person name="Abe K."/>
            <person name="Kamihara K."/>
            <person name="Katsuta N."/>
            <person name="Sato K."/>
            <person name="Tanikawa M."/>
            <person name="Yamazaki M."/>
            <person name="Ninomiya K."/>
            <person name="Ishibashi T."/>
            <person name="Yamashita H."/>
            <person name="Murakawa K."/>
            <person name="Fujimori K."/>
            <person name="Tanai H."/>
            <person name="Kimata M."/>
            <person name="Watanabe M."/>
            <person name="Hiraoka S."/>
            <person name="Chiba Y."/>
            <person name="Ishida S."/>
            <person name="Ono Y."/>
            <person name="Takiguchi S."/>
            <person name="Watanabe S."/>
            <person name="Yosida M."/>
            <person name="Hotuta T."/>
            <person name="Kusano J."/>
            <person name="Kanehori K."/>
            <person name="Takahashi-Fujii A."/>
            <person name="Hara H."/>
            <person name="Tanase T.-O."/>
            <person name="Nomura Y."/>
            <person name="Togiya S."/>
            <person name="Komai F."/>
            <person name="Hara R."/>
            <person name="Takeuchi K."/>
            <person name="Arita M."/>
            <person name="Imose N."/>
            <person name="Musashino K."/>
            <person name="Yuuki H."/>
            <person name="Oshima A."/>
            <person name="Sasaki N."/>
            <person name="Aotsuka S."/>
            <person name="Yoshikawa Y."/>
            <person name="Matsunawa H."/>
            <person name="Ichihara T."/>
            <person name="Shiohata N."/>
            <person name="Sano S."/>
            <person name="Moriya S."/>
            <person name="Momiyama H."/>
            <person name="Satoh N."/>
            <person name="Takami S."/>
            <person name="Terashima Y."/>
            <person name="Suzuki O."/>
            <person name="Nakagawa S."/>
            <person name="Senoh A."/>
            <person name="Mizoguchi H."/>
            <person name="Goto Y."/>
            <person name="Shimizu F."/>
            <person name="Wakebe H."/>
            <person name="Hishigaki H."/>
            <person name="Watanabe T."/>
            <person name="Sugiyama A."/>
            <person name="Takemoto M."/>
            <person name="Kawakami B."/>
            <person name="Yamazaki M."/>
            <person name="Watanabe K."/>
            <person name="Kumagai A."/>
            <person name="Itakura S."/>
            <person name="Fukuzumi Y."/>
            <person name="Fujimori Y."/>
            <person name="Komiyama M."/>
            <person name="Tashiro H."/>
            <person name="Tanigami A."/>
            <person name="Fujiwara T."/>
            <person name="Ono T."/>
            <person name="Yamada K."/>
            <person name="Fujii Y."/>
            <person name="Ozaki K."/>
            <person name="Hirao M."/>
            <person name="Ohmori Y."/>
            <person name="Kawabata A."/>
            <person name="Hikiji T."/>
            <person name="Kobatake N."/>
            <person name="Inagaki H."/>
            <person name="Ikema Y."/>
            <person name="Okamoto S."/>
            <person name="Okitani R."/>
            <person name="Kawakami T."/>
            <person name="Noguchi S."/>
            <person name="Itoh T."/>
            <person name="Shigeta K."/>
            <person name="Senba T."/>
            <person name="Matsumura K."/>
            <person name="Nakajima Y."/>
            <person name="Mizuno T."/>
            <person name="Morinaga M."/>
            <person name="Sasaki M."/>
            <person name="Togashi T."/>
            <person name="Oyama M."/>
            <person name="Hata H."/>
            <person name="Watanabe M."/>
            <person name="Komatsu T."/>
            <person name="Mizushima-Sugano J."/>
            <person name="Satoh T."/>
            <person name="Shirai Y."/>
            <person name="Takahashi Y."/>
            <person name="Nakagawa K."/>
            <person name="Okumura K."/>
            <person name="Nagase T."/>
            <person name="Nomura N."/>
            <person name="Kikuchi H."/>
            <person name="Masuho Y."/>
            <person name="Yamashita R."/>
            <person name="Nakai K."/>
            <person name="Yada T."/>
            <person name="Nakamura Y."/>
            <person name="Ohara O."/>
            <person name="Isogai T."/>
            <person name="Sugano S."/>
        </authorList>
    </citation>
    <scope>NUCLEOTIDE SEQUENCE [LARGE SCALE MRNA] (ISOFORM 1)</scope>
    <source>
        <tissue>Cerebellum</tissue>
    </source>
</reference>
<reference key="4">
    <citation type="journal article" date="2004" name="Nature">
        <title>DNA sequence and analysis of human chromosome 9.</title>
        <authorList>
            <person name="Humphray S.J."/>
            <person name="Oliver K."/>
            <person name="Hunt A.R."/>
            <person name="Plumb R.W."/>
            <person name="Loveland J.E."/>
            <person name="Howe K.L."/>
            <person name="Andrews T.D."/>
            <person name="Searle S."/>
            <person name="Hunt S.E."/>
            <person name="Scott C.E."/>
            <person name="Jones M.C."/>
            <person name="Ainscough R."/>
            <person name="Almeida J.P."/>
            <person name="Ambrose K.D."/>
            <person name="Ashwell R.I.S."/>
            <person name="Babbage A.K."/>
            <person name="Babbage S."/>
            <person name="Bagguley C.L."/>
            <person name="Bailey J."/>
            <person name="Banerjee R."/>
            <person name="Barker D.J."/>
            <person name="Barlow K.F."/>
            <person name="Bates K."/>
            <person name="Beasley H."/>
            <person name="Beasley O."/>
            <person name="Bird C.P."/>
            <person name="Bray-Allen S."/>
            <person name="Brown A.J."/>
            <person name="Brown J.Y."/>
            <person name="Burford D."/>
            <person name="Burrill W."/>
            <person name="Burton J."/>
            <person name="Carder C."/>
            <person name="Carter N.P."/>
            <person name="Chapman J.C."/>
            <person name="Chen Y."/>
            <person name="Clarke G."/>
            <person name="Clark S.Y."/>
            <person name="Clee C.M."/>
            <person name="Clegg S."/>
            <person name="Collier R.E."/>
            <person name="Corby N."/>
            <person name="Crosier M."/>
            <person name="Cummings A.T."/>
            <person name="Davies J."/>
            <person name="Dhami P."/>
            <person name="Dunn M."/>
            <person name="Dutta I."/>
            <person name="Dyer L.W."/>
            <person name="Earthrowl M.E."/>
            <person name="Faulkner L."/>
            <person name="Fleming C.J."/>
            <person name="Frankish A."/>
            <person name="Frankland J.A."/>
            <person name="French L."/>
            <person name="Fricker D.G."/>
            <person name="Garner P."/>
            <person name="Garnett J."/>
            <person name="Ghori J."/>
            <person name="Gilbert J.G.R."/>
            <person name="Glison C."/>
            <person name="Grafham D.V."/>
            <person name="Gribble S."/>
            <person name="Griffiths C."/>
            <person name="Griffiths-Jones S."/>
            <person name="Grocock R."/>
            <person name="Guy J."/>
            <person name="Hall R.E."/>
            <person name="Hammond S."/>
            <person name="Harley J.L."/>
            <person name="Harrison E.S.I."/>
            <person name="Hart E.A."/>
            <person name="Heath P.D."/>
            <person name="Henderson C.D."/>
            <person name="Hopkins B.L."/>
            <person name="Howard P.J."/>
            <person name="Howden P.J."/>
            <person name="Huckle E."/>
            <person name="Johnson C."/>
            <person name="Johnson D."/>
            <person name="Joy A.A."/>
            <person name="Kay M."/>
            <person name="Keenan S."/>
            <person name="Kershaw J.K."/>
            <person name="Kimberley A.M."/>
            <person name="King A."/>
            <person name="Knights A."/>
            <person name="Laird G.K."/>
            <person name="Langford C."/>
            <person name="Lawlor S."/>
            <person name="Leongamornlert D.A."/>
            <person name="Leversha M."/>
            <person name="Lloyd C."/>
            <person name="Lloyd D.M."/>
            <person name="Lovell J."/>
            <person name="Martin S."/>
            <person name="Mashreghi-Mohammadi M."/>
            <person name="Matthews L."/>
            <person name="McLaren S."/>
            <person name="McLay K.E."/>
            <person name="McMurray A."/>
            <person name="Milne S."/>
            <person name="Nickerson T."/>
            <person name="Nisbett J."/>
            <person name="Nordsiek G."/>
            <person name="Pearce A.V."/>
            <person name="Peck A.I."/>
            <person name="Porter K.M."/>
            <person name="Pandian R."/>
            <person name="Pelan S."/>
            <person name="Phillimore B."/>
            <person name="Povey S."/>
            <person name="Ramsey Y."/>
            <person name="Rand V."/>
            <person name="Scharfe M."/>
            <person name="Sehra H.K."/>
            <person name="Shownkeen R."/>
            <person name="Sims S.K."/>
            <person name="Skuce C.D."/>
            <person name="Smith M."/>
            <person name="Steward C.A."/>
            <person name="Swarbreck D."/>
            <person name="Sycamore N."/>
            <person name="Tester J."/>
            <person name="Thorpe A."/>
            <person name="Tracey A."/>
            <person name="Tromans A."/>
            <person name="Thomas D.W."/>
            <person name="Wall M."/>
            <person name="Wallis J.M."/>
            <person name="West A.P."/>
            <person name="Whitehead S.L."/>
            <person name="Willey D.L."/>
            <person name="Williams S.A."/>
            <person name="Wilming L."/>
            <person name="Wray P.W."/>
            <person name="Young L."/>
            <person name="Ashurst J.L."/>
            <person name="Coulson A."/>
            <person name="Blocker H."/>
            <person name="Durbin R.M."/>
            <person name="Sulston J.E."/>
            <person name="Hubbard T."/>
            <person name="Jackson M.J."/>
            <person name="Bentley D.R."/>
            <person name="Beck S."/>
            <person name="Rogers J."/>
            <person name="Dunham I."/>
        </authorList>
    </citation>
    <scope>NUCLEOTIDE SEQUENCE [LARGE SCALE GENOMIC DNA]</scope>
</reference>
<reference key="5">
    <citation type="submission" date="2005-07" db="EMBL/GenBank/DDBJ databases">
        <authorList>
            <person name="Mural R.J."/>
            <person name="Istrail S."/>
            <person name="Sutton G."/>
            <person name="Florea L."/>
            <person name="Halpern A.L."/>
            <person name="Mobarry C.M."/>
            <person name="Lippert R."/>
            <person name="Walenz B."/>
            <person name="Shatkay H."/>
            <person name="Dew I."/>
            <person name="Miller J.R."/>
            <person name="Flanigan M.J."/>
            <person name="Edwards N.J."/>
            <person name="Bolanos R."/>
            <person name="Fasulo D."/>
            <person name="Halldorsson B.V."/>
            <person name="Hannenhalli S."/>
            <person name="Turner R."/>
            <person name="Yooseph S."/>
            <person name="Lu F."/>
            <person name="Nusskern D.R."/>
            <person name="Shue B.C."/>
            <person name="Zheng X.H."/>
            <person name="Zhong F."/>
            <person name="Delcher A.L."/>
            <person name="Huson D.H."/>
            <person name="Kravitz S.A."/>
            <person name="Mouchard L."/>
            <person name="Reinert K."/>
            <person name="Remington K.A."/>
            <person name="Clark A.G."/>
            <person name="Waterman M.S."/>
            <person name="Eichler E.E."/>
            <person name="Adams M.D."/>
            <person name="Hunkapiller M.W."/>
            <person name="Myers E.W."/>
            <person name="Venter J.C."/>
        </authorList>
    </citation>
    <scope>NUCLEOTIDE SEQUENCE [LARGE SCALE GENOMIC DNA]</scope>
</reference>
<reference key="6">
    <citation type="journal article" date="2004" name="Genome Res.">
        <title>The status, quality, and expansion of the NIH full-length cDNA project: the Mammalian Gene Collection (MGC).</title>
        <authorList>
            <consortium name="The MGC Project Team"/>
        </authorList>
    </citation>
    <scope>NUCLEOTIDE SEQUENCE [LARGE SCALE MRNA] (ISOFORM 1)</scope>
    <source>
        <tissue>Ovary</tissue>
    </source>
</reference>
<reference key="7">
    <citation type="submission" date="2009-03" db="UniProtKB">
        <authorList>
            <person name="Bienvenut W.V."/>
            <person name="Waridel P."/>
            <person name="Quadroni M."/>
        </authorList>
    </citation>
    <scope>PROTEIN SEQUENCE OF 2-12 AND 278-286</scope>
    <scope>CLEAVAGE OF INITIATOR METHIONINE</scope>
    <scope>ACETYLATION AT THR-2</scope>
    <scope>IDENTIFICATION BY MASS SPECTROMETRY</scope>
    <source>
        <tissue>Embryonic kidney</tissue>
    </source>
</reference>
<reference key="8">
    <citation type="journal article" date="1999" name="Biochim. Biophys. Acta">
        <title>Cloning and characterization of the rat and human phosducin-like protein genes: structure, expression and chromosomal localization.</title>
        <authorList>
            <person name="Thibault C."/>
            <person name="Wang J.-F."/>
            <person name="Charnas R."/>
            <person name="Mirel D."/>
            <person name="Barhite S."/>
            <person name="Miles M.F."/>
        </authorList>
    </citation>
    <scope>NUCLEOTIDE SEQUENCE [GENOMIC DNA] OF 1-264 (ISOFORM 1)</scope>
</reference>
<reference key="9">
    <citation type="journal article" date="2004" name="J. Biomol. Tech.">
        <title>Identification of phosphorylation sites on phosducin-like protein by QTOF mass spectrometry.</title>
        <authorList>
            <person name="Carter M.D."/>
            <person name="Southwick K."/>
            <person name="Lukov G."/>
            <person name="Willardson B.M."/>
            <person name="Thulin C.D."/>
        </authorList>
    </citation>
    <scope>PHOSPHORYLATION AT SER-296</scope>
</reference>
<reference key="10">
    <citation type="journal article" date="2006" name="Cell">
        <title>Global, in vivo, and site-specific phosphorylation dynamics in signaling networks.</title>
        <authorList>
            <person name="Olsen J.V."/>
            <person name="Blagoev B."/>
            <person name="Gnad F."/>
            <person name="Macek B."/>
            <person name="Kumar C."/>
            <person name="Mortensen P."/>
            <person name="Mann M."/>
        </authorList>
    </citation>
    <scope>IDENTIFICATION BY MASS SPECTROMETRY [LARGE SCALE ANALYSIS]</scope>
    <source>
        <tissue>Cervix carcinoma</tissue>
    </source>
</reference>
<reference key="11">
    <citation type="journal article" date="2008" name="Proc. Natl. Acad. Sci. U.S.A.">
        <title>A quantitative atlas of mitotic phosphorylation.</title>
        <authorList>
            <person name="Dephoure N."/>
            <person name="Zhou C."/>
            <person name="Villen J."/>
            <person name="Beausoleil S.A."/>
            <person name="Bakalarski C.E."/>
            <person name="Elledge S.J."/>
            <person name="Gygi S.P."/>
        </authorList>
    </citation>
    <scope>PHOSPHORYLATION [LARGE SCALE ANALYSIS] AT SER-293 AND SER-296</scope>
    <scope>IDENTIFICATION BY MASS SPECTROMETRY [LARGE SCALE ANALYSIS]</scope>
    <source>
        <tissue>Cervix carcinoma</tissue>
    </source>
</reference>
<reference key="12">
    <citation type="journal article" date="2009" name="J. Biol. Chem.">
        <title>Role of molecular chaperones in G protein beta5/regulator of G protein signaling dimer assembly and G protein betagamma dimer specificity.</title>
        <authorList>
            <person name="Howlett A.C."/>
            <person name="Gray A.J."/>
            <person name="Hunter J.M."/>
            <person name="Willardson B.M."/>
        </authorList>
    </citation>
    <scope>FUNCTION (ISOFORM 1)</scope>
    <scope>SUBUNIT</scope>
</reference>
<reference key="13">
    <citation type="journal article" date="2011" name="BMC Syst. Biol.">
        <title>Initial characterization of the human central proteome.</title>
        <authorList>
            <person name="Burkard T.R."/>
            <person name="Planyavsky M."/>
            <person name="Kaupe I."/>
            <person name="Breitwieser F.P."/>
            <person name="Buerckstuemmer T."/>
            <person name="Bennett K.L."/>
            <person name="Superti-Furga G."/>
            <person name="Colinge J."/>
        </authorList>
    </citation>
    <scope>IDENTIFICATION BY MASS SPECTROMETRY [LARGE SCALE ANALYSIS]</scope>
</reference>
<reference key="14">
    <citation type="journal article" date="2013" name="J. Biol. Chem.">
        <title>Splice isoforms of phosducin-like protein control the expression of heterotrimeric G proteins.</title>
        <authorList>
            <person name="Gao X."/>
            <person name="Sinha S."/>
            <person name="Belcastro M."/>
            <person name="Woodard C."/>
            <person name="Ramamurthy V."/>
            <person name="Stoilov P."/>
            <person name="Sokolov M."/>
        </authorList>
    </citation>
    <scope>FUNCTION (ISOFORMS 1 AND 2)</scope>
    <scope>ALTERNATIVE SPLICING</scope>
    <scope>SUBUNIT</scope>
</reference>
<reference key="15">
    <citation type="journal article" date="2013" name="J. Proteome Res.">
        <title>Toward a comprehensive characterization of a human cancer cell phosphoproteome.</title>
        <authorList>
            <person name="Zhou H."/>
            <person name="Di Palma S."/>
            <person name="Preisinger C."/>
            <person name="Peng M."/>
            <person name="Polat A.N."/>
            <person name="Heck A.J."/>
            <person name="Mohammed S."/>
        </authorList>
    </citation>
    <scope>PHOSPHORYLATION [LARGE SCALE ANALYSIS] AT SER-226 AND SER-296</scope>
    <scope>IDENTIFICATION BY MASS SPECTROMETRY [LARGE SCALE ANALYSIS]</scope>
    <source>
        <tissue>Cervix carcinoma</tissue>
        <tissue>Erythroleukemia</tissue>
    </source>
</reference>
<dbReference type="EMBL" id="AF031463">
    <property type="protein sequence ID" value="AAD01930.1"/>
    <property type="molecule type" value="mRNA"/>
</dbReference>
<dbReference type="EMBL" id="AL117602">
    <property type="protein sequence ID" value="CAB56011.1"/>
    <property type="molecule type" value="mRNA"/>
</dbReference>
<dbReference type="EMBL" id="AK313429">
    <property type="protein sequence ID" value="BAG36221.1"/>
    <property type="molecule type" value="mRNA"/>
</dbReference>
<dbReference type="EMBL" id="AL359512">
    <property type="status" value="NOT_ANNOTATED_CDS"/>
    <property type="molecule type" value="Genomic_DNA"/>
</dbReference>
<dbReference type="EMBL" id="CH471090">
    <property type="protein sequence ID" value="EAW87546.1"/>
    <property type="molecule type" value="Genomic_DNA"/>
</dbReference>
<dbReference type="EMBL" id="BC017227">
    <property type="protein sequence ID" value="AAH17227.1"/>
    <property type="molecule type" value="mRNA"/>
</dbReference>
<dbReference type="EMBL" id="AF083324">
    <property type="protein sequence ID" value="AAC78848.1"/>
    <property type="molecule type" value="Genomic_DNA"/>
</dbReference>
<dbReference type="EMBL" id="AF083325">
    <property type="protein sequence ID" value="AAC78849.1"/>
    <property type="molecule type" value="Genomic_DNA"/>
</dbReference>
<dbReference type="EMBL" id="U38236">
    <property type="protein sequence ID" value="AAA79724.1"/>
    <property type="molecule type" value="Genomic_DNA"/>
</dbReference>
<dbReference type="CCDS" id="CCDS6845.1">
    <molecule id="Q13371-1"/>
</dbReference>
<dbReference type="PIR" id="T17321">
    <property type="entry name" value="T17321"/>
</dbReference>
<dbReference type="RefSeq" id="NP_005379.3">
    <molecule id="Q13371-1"/>
    <property type="nucleotide sequence ID" value="NM_005388.4"/>
</dbReference>
<dbReference type="PDB" id="8SFF">
    <property type="method" value="EM"/>
    <property type="resolution" value="3.20 A"/>
    <property type="chains" value="P=1-301"/>
</dbReference>
<dbReference type="PDB" id="8SG8">
    <property type="method" value="EM"/>
    <property type="resolution" value="3.00 A"/>
    <property type="chains" value="P=1-301"/>
</dbReference>
<dbReference type="PDB" id="8SGC">
    <property type="method" value="EM"/>
    <property type="resolution" value="2.90 A"/>
    <property type="chains" value="P=48-301"/>
</dbReference>
<dbReference type="PDB" id="8SH9">
    <property type="method" value="EM"/>
    <property type="resolution" value="2.70 A"/>
    <property type="chains" value="P=18-301"/>
</dbReference>
<dbReference type="PDB" id="8SHA">
    <property type="method" value="EM"/>
    <property type="resolution" value="3.00 A"/>
    <property type="chains" value="P=1-301"/>
</dbReference>
<dbReference type="PDB" id="8SHF">
    <property type="method" value="EM"/>
    <property type="resolution" value="3.00 A"/>
    <property type="chains" value="P=1-301"/>
</dbReference>
<dbReference type="PDB" id="8SHG">
    <property type="method" value="EM"/>
    <property type="resolution" value="2.80 A"/>
    <property type="chains" value="P=1-301"/>
</dbReference>
<dbReference type="PDB" id="8SHL">
    <property type="method" value="EM"/>
    <property type="resolution" value="3.00 A"/>
    <property type="chains" value="P=1-301"/>
</dbReference>
<dbReference type="PDB" id="8SHO">
    <property type="method" value="EM"/>
    <property type="resolution" value="3.00 A"/>
    <property type="chains" value="P=1-301"/>
</dbReference>
<dbReference type="PDB" id="8SHP">
    <property type="method" value="EM"/>
    <property type="resolution" value="3.00 A"/>
    <property type="chains" value="P=1-301"/>
</dbReference>
<dbReference type="PDB" id="8SHQ">
    <property type="method" value="EM"/>
    <property type="resolution" value="2.90 A"/>
    <property type="chains" value="P=1-301"/>
</dbReference>
<dbReference type="PDB" id="8SHT">
    <property type="method" value="EM"/>
    <property type="resolution" value="3.00 A"/>
    <property type="chains" value="P=1-301"/>
</dbReference>
<dbReference type="PDBsum" id="8SFF"/>
<dbReference type="PDBsum" id="8SG8"/>
<dbReference type="PDBsum" id="8SGC"/>
<dbReference type="PDBsum" id="8SH9"/>
<dbReference type="PDBsum" id="8SHA"/>
<dbReference type="PDBsum" id="8SHF"/>
<dbReference type="PDBsum" id="8SHG"/>
<dbReference type="PDBsum" id="8SHL"/>
<dbReference type="PDBsum" id="8SHO"/>
<dbReference type="PDBsum" id="8SHP"/>
<dbReference type="PDBsum" id="8SHQ"/>
<dbReference type="PDBsum" id="8SHT"/>
<dbReference type="EMDB" id="EMD-40440"/>
<dbReference type="EMDB" id="EMD-40452"/>
<dbReference type="EMDB" id="EMD-40454"/>
<dbReference type="EMDB" id="EMD-40481"/>
<dbReference type="EMDB" id="EMD-40482"/>
<dbReference type="EMDB" id="EMD-40486"/>
<dbReference type="EMDB" id="EMD-40487"/>
<dbReference type="EMDB" id="EMD-40488"/>
<dbReference type="EMDB" id="EMD-40490"/>
<dbReference type="EMDB" id="EMD-40491"/>
<dbReference type="EMDB" id="EMD-40492"/>
<dbReference type="EMDB" id="EMD-40494"/>
<dbReference type="SMR" id="Q13371"/>
<dbReference type="BioGRID" id="111116">
    <property type="interactions" value="161"/>
</dbReference>
<dbReference type="CORUM" id="Q13371"/>
<dbReference type="FunCoup" id="Q13371">
    <property type="interactions" value="2613"/>
</dbReference>
<dbReference type="IntAct" id="Q13371">
    <property type="interactions" value="73"/>
</dbReference>
<dbReference type="MINT" id="Q13371"/>
<dbReference type="STRING" id="9606.ENSP00000259467"/>
<dbReference type="GlyGen" id="Q13371">
    <property type="glycosylation" value="1 site, 1 O-linked glycan (1 site)"/>
</dbReference>
<dbReference type="iPTMnet" id="Q13371"/>
<dbReference type="PhosphoSitePlus" id="Q13371"/>
<dbReference type="BioMuta" id="PDCL"/>
<dbReference type="jPOST" id="Q13371"/>
<dbReference type="MassIVE" id="Q13371"/>
<dbReference type="PaxDb" id="9606-ENSP00000259467"/>
<dbReference type="PeptideAtlas" id="Q13371"/>
<dbReference type="ProteomicsDB" id="59355">
    <molecule id="Q13371-1"/>
</dbReference>
<dbReference type="Pumba" id="Q13371"/>
<dbReference type="Antibodypedia" id="16148">
    <property type="antibodies" value="142 antibodies from 31 providers"/>
</dbReference>
<dbReference type="DNASU" id="5082"/>
<dbReference type="Ensembl" id="ENST00000259467.9">
    <molecule id="Q13371-1"/>
    <property type="protein sequence ID" value="ENSP00000259467.4"/>
    <property type="gene ID" value="ENSG00000136940.14"/>
</dbReference>
<dbReference type="GeneID" id="5082"/>
<dbReference type="KEGG" id="hsa:5082"/>
<dbReference type="MANE-Select" id="ENST00000259467.9">
    <property type="protein sequence ID" value="ENSP00000259467.4"/>
    <property type="RefSeq nucleotide sequence ID" value="NM_005388.5"/>
    <property type="RefSeq protein sequence ID" value="NP_005379.3"/>
</dbReference>
<dbReference type="UCSC" id="uc004bmz.3">
    <molecule id="Q13371-1"/>
    <property type="organism name" value="human"/>
</dbReference>
<dbReference type="AGR" id="HGNC:8770"/>
<dbReference type="CTD" id="5082"/>
<dbReference type="DisGeNET" id="5082"/>
<dbReference type="GeneCards" id="PDCL"/>
<dbReference type="HGNC" id="HGNC:8770">
    <property type="gene designation" value="PDCL"/>
</dbReference>
<dbReference type="HPA" id="ENSG00000136940">
    <property type="expression patterns" value="Low tissue specificity"/>
</dbReference>
<dbReference type="MIM" id="604421">
    <property type="type" value="gene"/>
</dbReference>
<dbReference type="neXtProt" id="NX_Q13371"/>
<dbReference type="OpenTargets" id="ENSG00000136940"/>
<dbReference type="PharmGKB" id="PA33119"/>
<dbReference type="VEuPathDB" id="HostDB:ENSG00000136940"/>
<dbReference type="eggNOG" id="KOG3171">
    <property type="taxonomic scope" value="Eukaryota"/>
</dbReference>
<dbReference type="GeneTree" id="ENSGT00940000159569"/>
<dbReference type="HOGENOM" id="CLU_085598_0_0_1"/>
<dbReference type="InParanoid" id="Q13371"/>
<dbReference type="OMA" id="GIIEMMP"/>
<dbReference type="OrthoDB" id="70588at2759"/>
<dbReference type="PAN-GO" id="Q13371">
    <property type="GO annotations" value="2 GO annotations based on evolutionary models"/>
</dbReference>
<dbReference type="PhylomeDB" id="Q13371"/>
<dbReference type="TreeFam" id="TF315179"/>
<dbReference type="PathwayCommons" id="Q13371"/>
<dbReference type="Reactome" id="R-HSA-6814122">
    <property type="pathway name" value="Cooperation of PDCL (PhLP1) and TRiC/CCT in G-protein beta folding"/>
</dbReference>
<dbReference type="SignaLink" id="Q13371"/>
<dbReference type="SIGNOR" id="Q13371"/>
<dbReference type="BioGRID-ORCS" id="5082">
    <property type="hits" value="253 hits in 1161 CRISPR screens"/>
</dbReference>
<dbReference type="ChiTaRS" id="PDCL">
    <property type="organism name" value="human"/>
</dbReference>
<dbReference type="GeneWiki" id="Phosducin-like"/>
<dbReference type="GenomeRNAi" id="5082"/>
<dbReference type="Pharos" id="Q13371">
    <property type="development level" value="Tbio"/>
</dbReference>
<dbReference type="PRO" id="PR:Q13371"/>
<dbReference type="Proteomes" id="UP000005640">
    <property type="component" value="Chromosome 9"/>
</dbReference>
<dbReference type="RNAct" id="Q13371">
    <property type="molecule type" value="protein"/>
</dbReference>
<dbReference type="Bgee" id="ENSG00000136940">
    <property type="expression patterns" value="Expressed in buccal mucosa cell and 202 other cell types or tissues"/>
</dbReference>
<dbReference type="ExpressionAtlas" id="Q13371">
    <property type="expression patterns" value="baseline and differential"/>
</dbReference>
<dbReference type="GO" id="GO:0005929">
    <property type="term" value="C:cilium"/>
    <property type="evidence" value="ECO:0007669"/>
    <property type="project" value="UniProtKB-SubCell"/>
</dbReference>
<dbReference type="GO" id="GO:0005737">
    <property type="term" value="C:cytoplasm"/>
    <property type="evidence" value="ECO:0000314"/>
    <property type="project" value="LIFEdb"/>
</dbReference>
<dbReference type="GO" id="GO:0005829">
    <property type="term" value="C:cytosol"/>
    <property type="evidence" value="ECO:0000304"/>
    <property type="project" value="Reactome"/>
</dbReference>
<dbReference type="GO" id="GO:0030030">
    <property type="term" value="P:cell projection organization"/>
    <property type="evidence" value="ECO:0007669"/>
    <property type="project" value="UniProtKB-KW"/>
</dbReference>
<dbReference type="GO" id="GO:1902605">
    <property type="term" value="P:heterotrimeric G-protein complex assembly"/>
    <property type="evidence" value="ECO:0000318"/>
    <property type="project" value="GO_Central"/>
</dbReference>
<dbReference type="GO" id="GO:0045880">
    <property type="term" value="P:positive regulation of smoothened signaling pathway"/>
    <property type="evidence" value="ECO:0000250"/>
    <property type="project" value="UniProtKB"/>
</dbReference>
<dbReference type="GO" id="GO:0008277">
    <property type="term" value="P:regulation of G protein-coupled receptor signaling pathway"/>
    <property type="evidence" value="ECO:0000304"/>
    <property type="project" value="ProtInc"/>
</dbReference>
<dbReference type="GO" id="GO:0007165">
    <property type="term" value="P:signal transduction"/>
    <property type="evidence" value="ECO:0000303"/>
    <property type="project" value="UniProtKB"/>
</dbReference>
<dbReference type="GO" id="GO:0007601">
    <property type="term" value="P:visual perception"/>
    <property type="evidence" value="ECO:0007669"/>
    <property type="project" value="UniProtKB-KW"/>
</dbReference>
<dbReference type="CDD" id="cd02987">
    <property type="entry name" value="Phd_like_Phd"/>
    <property type="match status" value="1"/>
</dbReference>
<dbReference type="FunFam" id="3.40.30.10:FF:000072">
    <property type="entry name" value="Phosducin like"/>
    <property type="match status" value="1"/>
</dbReference>
<dbReference type="FunFam" id="1.10.168.10:FF:000001">
    <property type="entry name" value="phosducin-like protein"/>
    <property type="match status" value="1"/>
</dbReference>
<dbReference type="Gene3D" id="3.40.30.10">
    <property type="entry name" value="Glutaredoxin"/>
    <property type="match status" value="1"/>
</dbReference>
<dbReference type="Gene3D" id="1.10.168.10">
    <property type="entry name" value="Phosducin, domain 2"/>
    <property type="match status" value="1"/>
</dbReference>
<dbReference type="InterPro" id="IPR001200">
    <property type="entry name" value="Phosducin"/>
</dbReference>
<dbReference type="InterPro" id="IPR051499">
    <property type="entry name" value="Phosducin-like_reg"/>
</dbReference>
<dbReference type="InterPro" id="IPR023196">
    <property type="entry name" value="Phosducin_N_dom_sf"/>
</dbReference>
<dbReference type="InterPro" id="IPR024253">
    <property type="entry name" value="Phosducin_thioredoxin-like_dom"/>
</dbReference>
<dbReference type="InterPro" id="IPR036249">
    <property type="entry name" value="Thioredoxin-like_sf"/>
</dbReference>
<dbReference type="PANTHER" id="PTHR46052">
    <property type="entry name" value="PHOSDUCIN-LIKE PROTEIN"/>
    <property type="match status" value="1"/>
</dbReference>
<dbReference type="PANTHER" id="PTHR46052:SF4">
    <property type="entry name" value="PHOSDUCIN-LIKE PROTEIN"/>
    <property type="match status" value="1"/>
</dbReference>
<dbReference type="Pfam" id="PF02114">
    <property type="entry name" value="Phosducin"/>
    <property type="match status" value="1"/>
</dbReference>
<dbReference type="PRINTS" id="PR00677">
    <property type="entry name" value="PHOSDUCIN"/>
</dbReference>
<dbReference type="SUPFAM" id="SSF52833">
    <property type="entry name" value="Thioredoxin-like"/>
    <property type="match status" value="1"/>
</dbReference>
<evidence type="ECO:0000250" key="1">
    <source>
        <dbReference type="UniProtKB" id="Q63737"/>
    </source>
</evidence>
<evidence type="ECO:0000250" key="2">
    <source>
        <dbReference type="UniProtKB" id="Q9DBX2"/>
    </source>
</evidence>
<evidence type="ECO:0000255" key="3"/>
<evidence type="ECO:0000256" key="4">
    <source>
        <dbReference type="SAM" id="MobiDB-lite"/>
    </source>
</evidence>
<evidence type="ECO:0000269" key="5">
    <source>
    </source>
</evidence>
<evidence type="ECO:0000269" key="6">
    <source>
    </source>
</evidence>
<evidence type="ECO:0000269" key="7">
    <source>
    </source>
</evidence>
<evidence type="ECO:0000269" key="8">
    <source ref="7"/>
</evidence>
<evidence type="ECO:0000305" key="9"/>
<evidence type="ECO:0007744" key="10">
    <source>
    </source>
</evidence>
<evidence type="ECO:0007744" key="11">
    <source>
    </source>
</evidence>
<evidence type="ECO:0007829" key="12">
    <source>
        <dbReference type="PDB" id="8SH9"/>
    </source>
</evidence>
<evidence type="ECO:0007829" key="13">
    <source>
        <dbReference type="PDB" id="8SHG"/>
    </source>
</evidence>
<evidence type="ECO:0007829" key="14">
    <source>
        <dbReference type="PDB" id="8SHL"/>
    </source>
</evidence>
<gene>
    <name type="primary">PDCL</name>
    <name type="synonym">PHLOP1</name>
    <name type="synonym">PhLP1</name>
</gene>
<proteinExistence type="evidence at protein level"/>
<protein>
    <recommendedName>
        <fullName>Phosducin-like protein</fullName>
        <shortName>PHLP</shortName>
    </recommendedName>
</protein>
<sequence length="301" mass="34282">MTTLDDKLLGEKLQYYYSSSEDEDSDHEDKDRGRCAPASSSVPAEAELAGEGISVNTGPKGVINDWRRFKQLETEQREEQCREMERLIKKLSMTCRSHLDEEEEQQKQKDLQEKISGKMTLKEFAIMNEDQDDEEFLQQYRKQRMEEMRQQLHKGPQFKQVFEISSGEGFLDMIDKEQKSIVIMVHIYEDGIPGTEAMNGCMICLAAEYPAVKFCKVKSSVIGASSQFTRNALPALLIYKGGELIGNFVRVTDQLGDDFFAVDLEAFLQEFGLLPEKEVLVLTSVRNSATCHSEDSDLEID</sequence>
<feature type="initiator methionine" description="Removed" evidence="8">
    <location>
        <position position="1"/>
    </location>
</feature>
<feature type="chain" id="PRO_0000163755" description="Phosducin-like protein">
    <location>
        <begin position="2"/>
        <end position="301"/>
    </location>
</feature>
<feature type="domain" description="Phosducin" evidence="3">
    <location>
        <begin position="36"/>
        <end position="299"/>
    </location>
</feature>
<feature type="region of interest" description="Disordered" evidence="4">
    <location>
        <begin position="18"/>
        <end position="57"/>
    </location>
</feature>
<feature type="compositionally biased region" description="Low complexity" evidence="4">
    <location>
        <begin position="36"/>
        <end position="49"/>
    </location>
</feature>
<feature type="modified residue" description="N-acetylthreonine" evidence="8">
    <location>
        <position position="2"/>
    </location>
</feature>
<feature type="modified residue" description="Phosphoserine" evidence="1">
    <location>
        <position position="20"/>
    </location>
</feature>
<feature type="modified residue" description="Phosphoserine" evidence="2">
    <location>
        <position position="25"/>
    </location>
</feature>
<feature type="modified residue" description="Phosphoserine" evidence="11">
    <location>
        <position position="226"/>
    </location>
</feature>
<feature type="modified residue" description="Phosphoserine" evidence="10">
    <location>
        <position position="293"/>
    </location>
</feature>
<feature type="modified residue" description="Phosphoserine" evidence="5 10 11">
    <location>
        <position position="296"/>
    </location>
</feature>
<feature type="splice variant" id="VSP_053571" description="In isoform 2." evidence="9">
    <location>
        <begin position="1"/>
        <end position="83"/>
    </location>
</feature>
<feature type="sequence variant" id="VAR_050525" description="In dbSNP:rs4466466.">
    <original>K</original>
    <variation>N</variation>
    <location>
        <position position="218"/>
    </location>
</feature>
<feature type="sequence conflict" description="In Ref. 1; AAD01930." evidence="9" ref="1">
    <original>Q</original>
    <variation>E</variation>
    <location>
        <position position="151"/>
    </location>
</feature>
<feature type="sequence conflict" description="In Ref. 2; CAB56011." evidence="9" ref="2">
    <original>K</original>
    <variation>E</variation>
    <location>
        <position position="218"/>
    </location>
</feature>
<feature type="helix" evidence="12">
    <location>
        <begin position="58"/>
        <end position="84"/>
    </location>
</feature>
<feature type="turn" evidence="12">
    <location>
        <begin position="85"/>
        <end position="91"/>
    </location>
</feature>
<feature type="helix" evidence="12">
    <location>
        <begin position="137"/>
        <end position="139"/>
    </location>
</feature>
<feature type="helix" evidence="12">
    <location>
        <begin position="142"/>
        <end position="151"/>
    </location>
</feature>
<feature type="strand" evidence="12">
    <location>
        <begin position="162"/>
        <end position="164"/>
    </location>
</feature>
<feature type="helix" evidence="12">
    <location>
        <begin position="167"/>
        <end position="175"/>
    </location>
</feature>
<feature type="strand" evidence="12">
    <location>
        <begin position="181"/>
        <end position="188"/>
    </location>
</feature>
<feature type="strand" evidence="14">
    <location>
        <begin position="190"/>
        <end position="192"/>
    </location>
</feature>
<feature type="helix" evidence="12">
    <location>
        <begin position="195"/>
        <end position="208"/>
    </location>
</feature>
<feature type="strand" evidence="12">
    <location>
        <begin position="210"/>
        <end position="212"/>
    </location>
</feature>
<feature type="strand" evidence="12">
    <location>
        <begin position="215"/>
        <end position="218"/>
    </location>
</feature>
<feature type="helix" evidence="12">
    <location>
        <begin position="219"/>
        <end position="222"/>
    </location>
</feature>
<feature type="helix" evidence="12">
    <location>
        <begin position="226"/>
        <end position="231"/>
    </location>
</feature>
<feature type="strand" evidence="12">
    <location>
        <begin position="234"/>
        <end position="240"/>
    </location>
</feature>
<feature type="strand" evidence="12">
    <location>
        <begin position="243"/>
        <end position="247"/>
    </location>
</feature>
<feature type="helix" evidence="12">
    <location>
        <begin position="251"/>
        <end position="255"/>
    </location>
</feature>
<feature type="helix" evidence="12">
    <location>
        <begin position="261"/>
        <end position="269"/>
    </location>
</feature>
<feature type="turn" evidence="12">
    <location>
        <begin position="270"/>
        <end position="272"/>
    </location>
</feature>
<feature type="strand" evidence="13">
    <location>
        <begin position="284"/>
        <end position="286"/>
    </location>
</feature>
<keyword id="KW-0002">3D-structure</keyword>
<keyword id="KW-0007">Acetylation</keyword>
<keyword id="KW-0025">Alternative splicing</keyword>
<keyword id="KW-0966">Cell projection</keyword>
<keyword id="KW-0143">Chaperone</keyword>
<keyword id="KW-0970">Cilium biogenesis/degradation</keyword>
<keyword id="KW-0903">Direct protein sequencing</keyword>
<keyword id="KW-0597">Phosphoprotein</keyword>
<keyword id="KW-1267">Proteomics identification</keyword>
<keyword id="KW-1185">Reference proteome</keyword>
<keyword id="KW-0716">Sensory transduction</keyword>
<keyword id="KW-0844">Vision</keyword>
<comment type="function">
    <text evidence="2">Acts as a positive regulator of hedgehog signaling and regulates ciliary function.</text>
</comment>
<comment type="function">
    <molecule>Isoform 1</molecule>
    <text>Functions as a co-chaperone for CCT in the assembly of heterotrimeric G protein complexes, facilitates the assembly of both Gbeta-Ggamma and RGS-Gbeta5 heterodimers.</text>
</comment>
<comment type="function">
    <molecule>Isoform 2</molecule>
    <text>Acts as a negative regulator of heterotrimeric G proteins assembly by trapping the preloaded G beta subunits inside the CCT chaperonin.</text>
</comment>
<comment type="subunit">
    <text evidence="6 7">Forms a complex with the beta and gamma subunits of the GTP-binding protein, transducin. Interacts with the CCT chaperonin complex.</text>
</comment>
<comment type="interaction">
    <interactant intactId="EBI-5772890">
        <id>Q13371</id>
    </interactant>
    <interactant intactId="EBI-11954292">
        <id>Q86V38</id>
        <label>ATN1</label>
    </interactant>
    <organismsDiffer>false</organismsDiffer>
    <experiments>3</experiments>
</comment>
<comment type="interaction">
    <interactant intactId="EBI-5772890">
        <id>Q13371</id>
    </interactant>
    <interactant intactId="EBI-356673">
        <id>P49368</id>
        <label>CCT3</label>
    </interactant>
    <organismsDiffer>false</organismsDiffer>
    <experiments>9</experiments>
</comment>
<comment type="interaction">
    <interactant intactId="EBI-5772890">
        <id>Q13371</id>
    </interactant>
    <interactant intactId="EBI-10220715">
        <id>P63211</id>
        <label>GNGT1</label>
    </interactant>
    <organismsDiffer>false</organismsDiffer>
    <experiments>2</experiments>
</comment>
<comment type="interaction">
    <interactant intactId="EBI-5772890">
        <id>Q13371</id>
    </interactant>
    <interactant intactId="EBI-2432309">
        <id>Q92876</id>
        <label>KLK6</label>
    </interactant>
    <organismsDiffer>false</organismsDiffer>
    <experiments>3</experiments>
</comment>
<comment type="interaction">
    <interactant intactId="EBI-5772890">
        <id>Q13371</id>
    </interactant>
    <interactant intactId="EBI-5453723">
        <id>Q9Y3B7</id>
        <label>MRPL11</label>
    </interactant>
    <organismsDiffer>false</organismsDiffer>
    <experiments>3</experiments>
</comment>
<comment type="interaction">
    <interactant intactId="EBI-5772890">
        <id>Q13371</id>
    </interactant>
    <interactant intactId="EBI-357745">
        <id>P62195</id>
        <label>PSMC5</label>
    </interactant>
    <organismsDiffer>false</organismsDiffer>
    <experiments>16</experiments>
</comment>
<comment type="subcellular location">
    <subcellularLocation>
        <location evidence="2">Cell projection</location>
        <location evidence="2">Cilium</location>
    </subcellularLocation>
</comment>
<comment type="alternative products">
    <event type="alternative splicing"/>
    <isoform>
        <id>Q13371-1</id>
        <name>1</name>
        <sequence type="displayed"/>
    </isoform>
    <isoform>
        <id>Q13371-2</id>
        <name>2</name>
        <name>PhLPs</name>
        <sequence type="described" ref="VSP_053571"/>
    </isoform>
</comment>
<comment type="miscellaneous">
    <molecule>Isoform 2</molecule>
    <text evidence="9">Expressed ubiquitously, highest levels are found in neural tissues amounting to 10% of total PDCL mRNA.</text>
</comment>
<comment type="similarity">
    <text evidence="9">Belongs to the phosducin family.</text>
</comment>
<name>PHLP_HUMAN</name>